<name>PSBB_SORBI</name>
<dbReference type="EMBL" id="EF115542">
    <property type="protein sequence ID" value="ABK79521.1"/>
    <property type="molecule type" value="Genomic_DNA"/>
</dbReference>
<dbReference type="RefSeq" id="YP_899433.1">
    <property type="nucleotide sequence ID" value="NC_008602.1"/>
</dbReference>
<dbReference type="SMR" id="A1E9V0"/>
<dbReference type="FunCoup" id="A1E9V0">
    <property type="interactions" value="430"/>
</dbReference>
<dbReference type="STRING" id="4558.A1E9V0"/>
<dbReference type="GeneID" id="4549217"/>
<dbReference type="KEGG" id="sbi:4549217"/>
<dbReference type="eggNOG" id="ENOG502RRU3">
    <property type="taxonomic scope" value="Eukaryota"/>
</dbReference>
<dbReference type="InParanoid" id="A1E9V0"/>
<dbReference type="OrthoDB" id="582790at2759"/>
<dbReference type="Proteomes" id="UP000000768">
    <property type="component" value="Chloroplast"/>
</dbReference>
<dbReference type="ExpressionAtlas" id="A1E9V0">
    <property type="expression patterns" value="baseline and differential"/>
</dbReference>
<dbReference type="GO" id="GO:0009535">
    <property type="term" value="C:chloroplast thylakoid membrane"/>
    <property type="evidence" value="ECO:0007669"/>
    <property type="project" value="UniProtKB-SubCell"/>
</dbReference>
<dbReference type="GO" id="GO:0009523">
    <property type="term" value="C:photosystem II"/>
    <property type="evidence" value="ECO:0007669"/>
    <property type="project" value="UniProtKB-KW"/>
</dbReference>
<dbReference type="GO" id="GO:0016168">
    <property type="term" value="F:chlorophyll binding"/>
    <property type="evidence" value="ECO:0007669"/>
    <property type="project" value="UniProtKB-UniRule"/>
</dbReference>
<dbReference type="GO" id="GO:0045156">
    <property type="term" value="F:electron transporter, transferring electrons within the cyclic electron transport pathway of photosynthesis activity"/>
    <property type="evidence" value="ECO:0007669"/>
    <property type="project" value="InterPro"/>
</dbReference>
<dbReference type="GO" id="GO:0009772">
    <property type="term" value="P:photosynthetic electron transport in photosystem II"/>
    <property type="evidence" value="ECO:0007669"/>
    <property type="project" value="InterPro"/>
</dbReference>
<dbReference type="FunFam" id="3.10.680.10:FF:000001">
    <property type="entry name" value="Photosystem II CP47 reaction center protein"/>
    <property type="match status" value="1"/>
</dbReference>
<dbReference type="Gene3D" id="3.10.680.10">
    <property type="entry name" value="Photosystem II CP47 reaction center protein"/>
    <property type="match status" value="1"/>
</dbReference>
<dbReference type="HAMAP" id="MF_01495">
    <property type="entry name" value="PSII_PsbB_CP47"/>
    <property type="match status" value="1"/>
</dbReference>
<dbReference type="InterPro" id="IPR000932">
    <property type="entry name" value="PS_antenna-like"/>
</dbReference>
<dbReference type="InterPro" id="IPR036001">
    <property type="entry name" value="PS_II_antenna-like_sf"/>
</dbReference>
<dbReference type="InterPro" id="IPR017486">
    <property type="entry name" value="PSII_PsbB"/>
</dbReference>
<dbReference type="NCBIfam" id="TIGR03039">
    <property type="entry name" value="PS_II_CP47"/>
    <property type="match status" value="1"/>
</dbReference>
<dbReference type="PANTHER" id="PTHR33180">
    <property type="entry name" value="PHOTOSYSTEM II CP43 REACTION CENTER PROTEIN"/>
    <property type="match status" value="1"/>
</dbReference>
<dbReference type="PANTHER" id="PTHR33180:SF37">
    <property type="entry name" value="PHOTOSYSTEM II CP43 REACTION CENTER PROTEIN"/>
    <property type="match status" value="1"/>
</dbReference>
<dbReference type="Pfam" id="PF00421">
    <property type="entry name" value="PSII"/>
    <property type="match status" value="1"/>
</dbReference>
<dbReference type="SUPFAM" id="SSF161077">
    <property type="entry name" value="Photosystem II antenna protein-like"/>
    <property type="match status" value="1"/>
</dbReference>
<geneLocation type="chloroplast"/>
<accession>A1E9V0</accession>
<sequence>MGLPWYRVHTVVLNDPGRLLSVHIMHTALVSGWAGSMALYELAVFDPSDPVLDPMWRQGMFVIPFMTRLGITNSWGGWSISGGTVTNPGIWSYEGVAGAHIVFSGLCFLAAIWHWVYWDLEIFCDERTGKPSLDLPKIFGIHLFLAGVACFGFGAFHVTGLYGPGIWVSDPYGLTGKVQAVNPAWGAEGFDPFVPGGIASHHIAAGTLGILAGLFHLSVRPPQRLYKGLRMGNIETVLSSSIAAVFFAAFVVAGTMWYGSATTPIELFGPTRYQWDQGYFQQEIYRRVSDGLAENLSLSEAWSKIPEKLAFYDYIGNNPAKGGLFRAGSMDNGDGIAVGWLGHPVFRDKEGRELFVRRMPTFFETFPVVLVDEEGIVRADVPFRRAESKYSVEQVGVTVEFYGGELNGVSYSDPATVKKYARRAQLGEIFELDRATLKSDGVFRSSPRGWFTFGHATFALLFFFGHIWHGARTLFRDVFAGIDPDLDAQVEFGTFQKVGDPTTRRQAA</sequence>
<organism>
    <name type="scientific">Sorghum bicolor</name>
    <name type="common">Sorghum</name>
    <name type="synonym">Sorghum vulgare</name>
    <dbReference type="NCBI Taxonomy" id="4558"/>
    <lineage>
        <taxon>Eukaryota</taxon>
        <taxon>Viridiplantae</taxon>
        <taxon>Streptophyta</taxon>
        <taxon>Embryophyta</taxon>
        <taxon>Tracheophyta</taxon>
        <taxon>Spermatophyta</taxon>
        <taxon>Magnoliopsida</taxon>
        <taxon>Liliopsida</taxon>
        <taxon>Poales</taxon>
        <taxon>Poaceae</taxon>
        <taxon>PACMAD clade</taxon>
        <taxon>Panicoideae</taxon>
        <taxon>Andropogonodae</taxon>
        <taxon>Andropogoneae</taxon>
        <taxon>Sorghinae</taxon>
        <taxon>Sorghum</taxon>
    </lineage>
</organism>
<keyword id="KW-0148">Chlorophyll</keyword>
<keyword id="KW-0150">Chloroplast</keyword>
<keyword id="KW-0157">Chromophore</keyword>
<keyword id="KW-0472">Membrane</keyword>
<keyword id="KW-0602">Photosynthesis</keyword>
<keyword id="KW-0604">Photosystem II</keyword>
<keyword id="KW-0934">Plastid</keyword>
<keyword id="KW-1185">Reference proteome</keyword>
<keyword id="KW-0793">Thylakoid</keyword>
<keyword id="KW-0812">Transmembrane</keyword>
<keyword id="KW-1133">Transmembrane helix</keyword>
<comment type="function">
    <text evidence="1">One of the components of the core complex of photosystem II (PSII). It binds chlorophyll and helps catalyze the primary light-induced photochemical processes of PSII. PSII is a light-driven water:plastoquinone oxidoreductase, using light energy to abstract electrons from H(2)O, generating O(2) and a proton gradient subsequently used for ATP formation.</text>
</comment>
<comment type="cofactor">
    <text evidence="1">Binds multiple chlorophylls. PSII binds additional chlorophylls, carotenoids and specific lipids.</text>
</comment>
<comment type="subunit">
    <text evidence="1">PSII is composed of 1 copy each of membrane proteins PsbA, PsbB, PsbC, PsbD, PsbE, PsbF, PsbH, PsbI, PsbJ, PsbK, PsbL, PsbM, PsbT, PsbX, PsbY, PsbZ, Psb30/Ycf12, at least 3 peripheral proteins of the oxygen-evolving complex and a large number of cofactors. It forms dimeric complexes.</text>
</comment>
<comment type="subcellular location">
    <subcellularLocation>
        <location evidence="1">Plastid</location>
        <location evidence="1">Chloroplast thylakoid membrane</location>
        <topology evidence="1">Multi-pass membrane protein</topology>
    </subcellularLocation>
</comment>
<comment type="similarity">
    <text evidence="1">Belongs to the PsbB/PsbC family. PsbB subfamily.</text>
</comment>
<evidence type="ECO:0000255" key="1">
    <source>
        <dbReference type="HAMAP-Rule" id="MF_01495"/>
    </source>
</evidence>
<proteinExistence type="inferred from homology"/>
<protein>
    <recommendedName>
        <fullName evidence="1">Photosystem II CP47 reaction center protein</fullName>
    </recommendedName>
    <alternativeName>
        <fullName evidence="1">PSII 47 kDa protein</fullName>
    </alternativeName>
    <alternativeName>
        <fullName evidence="1">Protein CP-47</fullName>
    </alternativeName>
</protein>
<gene>
    <name evidence="1" type="primary">psbB</name>
</gene>
<feature type="chain" id="PRO_0000359863" description="Photosystem II CP47 reaction center protein">
    <location>
        <begin position="1"/>
        <end position="508"/>
    </location>
</feature>
<feature type="transmembrane region" description="Helical" evidence="1">
    <location>
        <begin position="21"/>
        <end position="36"/>
    </location>
</feature>
<feature type="transmembrane region" description="Helical" evidence="1">
    <location>
        <begin position="101"/>
        <end position="115"/>
    </location>
</feature>
<feature type="transmembrane region" description="Helical" evidence="1">
    <location>
        <begin position="140"/>
        <end position="156"/>
    </location>
</feature>
<feature type="transmembrane region" description="Helical" evidence="1">
    <location>
        <begin position="203"/>
        <end position="218"/>
    </location>
</feature>
<feature type="transmembrane region" description="Helical" evidence="1">
    <location>
        <begin position="237"/>
        <end position="252"/>
    </location>
</feature>
<feature type="transmembrane region" description="Helical" evidence="1">
    <location>
        <begin position="457"/>
        <end position="472"/>
    </location>
</feature>
<reference key="1">
    <citation type="journal article" date="2007" name="Theor. Appl. Genet.">
        <title>Complete chloroplast genome sequences of Hordeum vulgare, Sorghum bicolor and Agrostis stolonifera, and comparative analyses with other grass genomes.</title>
        <authorList>
            <person name="Saski C."/>
            <person name="Lee S.-B."/>
            <person name="Fjellheim S."/>
            <person name="Guda C."/>
            <person name="Jansen R.K."/>
            <person name="Luo H."/>
            <person name="Tomkins J."/>
            <person name="Rognli O.A."/>
            <person name="Daniell H."/>
            <person name="Clarke J.L."/>
        </authorList>
    </citation>
    <scope>NUCLEOTIDE SEQUENCE [LARGE SCALE GENOMIC DNA]</scope>
    <source>
        <strain>cv. BTx623</strain>
    </source>
</reference>